<comment type="function">
    <text evidence="1">Catalyzes the depolymerization of alginate by cleaving the beta-1,4 glycosidic bond between two adjacent sugar residues via a beta-elimination mechanism. May serve to degrade mislocalized alginate that is trapped in the periplasmic space.</text>
</comment>
<comment type="catalytic activity">
    <reaction evidence="1">
        <text>Eliminative cleavage of alginate to give oligosaccharides with 4-deoxy-alpha-L-erythro-hex-4-enuronosyl groups at their non-reducing ends and beta-D-mannuronate at their reducing end.</text>
        <dbReference type="EC" id="4.2.2.3"/>
    </reaction>
</comment>
<comment type="subcellular location">
    <subcellularLocation>
        <location evidence="1">Periplasm</location>
    </subcellularLocation>
</comment>
<comment type="similarity">
    <text evidence="1">Belongs to the polysaccharide lyase 5 family.</text>
</comment>
<accession>B1J479</accession>
<keyword id="KW-0456">Lyase</keyword>
<keyword id="KW-0574">Periplasm</keyword>
<keyword id="KW-0732">Signal</keyword>
<reference key="1">
    <citation type="submission" date="2008-02" db="EMBL/GenBank/DDBJ databases">
        <title>Complete sequence of Pseudomonas putida W619.</title>
        <authorList>
            <person name="Copeland A."/>
            <person name="Lucas S."/>
            <person name="Lapidus A."/>
            <person name="Barry K."/>
            <person name="Detter J.C."/>
            <person name="Glavina del Rio T."/>
            <person name="Dalin E."/>
            <person name="Tice H."/>
            <person name="Pitluck S."/>
            <person name="Chain P."/>
            <person name="Malfatti S."/>
            <person name="Shin M."/>
            <person name="Vergez L."/>
            <person name="Schmutz J."/>
            <person name="Larimer F."/>
            <person name="Land M."/>
            <person name="Hauser L."/>
            <person name="Kyrpides N."/>
            <person name="Kim E."/>
            <person name="Taghavi S."/>
            <person name="Vangronsveld D."/>
            <person name="van der Lelie D."/>
            <person name="Richardson P."/>
        </authorList>
    </citation>
    <scope>NUCLEOTIDE SEQUENCE [LARGE SCALE GENOMIC DNA]</scope>
    <source>
        <strain>W619</strain>
    </source>
</reference>
<gene>
    <name evidence="1" type="primary">algL</name>
    <name type="ordered locus">PputW619_0882</name>
</gene>
<sequence length="367" mass="41551">MTAFKRIFSPALLVLALYGGAAHAALVPPQGYYEGIEKIKTSDGNFRCESAPKPFTGALQFRSKYEGSDKARATLNRDSEQAFRDSTKDITTLERGVAKMVNQYMRDGRPAQLDCTLTWLGTWARADALMSTNYNHTGKSMRKWALGSMSGSWLRLKFSNSQPLAAHQAEAELIEKWFARLAEQTVRDWSNLPLEKINNHSYWAAWSVMATAVATDRRDLFDWAVKEYKVGANQIDDQGFLPNEIKRKQRALAYHNYALPPLAMIASFAKANGVDLRSENNFALQRLGEGVLYGARDPRHFAERAGEKQDMKDLKVDGKYAWLEPWCALYQCVGDTLERKHRMQPFDSFRLGGNLTRVYDPSAQSKK</sequence>
<dbReference type="EC" id="4.2.2.3" evidence="1"/>
<dbReference type="EMBL" id="CP000949">
    <property type="protein sequence ID" value="ACA71387.1"/>
    <property type="molecule type" value="Genomic_DNA"/>
</dbReference>
<dbReference type="SMR" id="B1J479"/>
<dbReference type="STRING" id="390235.PputW619_0882"/>
<dbReference type="CAZy" id="PL5">
    <property type="family name" value="Polysaccharide Lyase Family 5"/>
</dbReference>
<dbReference type="KEGG" id="ppw:PputW619_0882"/>
<dbReference type="eggNOG" id="ENOG502ZAMJ">
    <property type="taxonomic scope" value="Bacteria"/>
</dbReference>
<dbReference type="HOGENOM" id="CLU_064286_0_0_6"/>
<dbReference type="OrthoDB" id="6972889at2"/>
<dbReference type="GO" id="GO:0042597">
    <property type="term" value="C:periplasmic space"/>
    <property type="evidence" value="ECO:0007669"/>
    <property type="project" value="UniProtKB-SubCell"/>
</dbReference>
<dbReference type="GO" id="GO:0045135">
    <property type="term" value="F:poly(beta-D-mannuronate) lyase activity"/>
    <property type="evidence" value="ECO:0007669"/>
    <property type="project" value="UniProtKB-UniRule"/>
</dbReference>
<dbReference type="GO" id="GO:0042122">
    <property type="term" value="P:alginic acid catabolic process"/>
    <property type="evidence" value="ECO:0007669"/>
    <property type="project" value="UniProtKB-UniRule"/>
</dbReference>
<dbReference type="CDD" id="cd00244">
    <property type="entry name" value="AlgLyase"/>
    <property type="match status" value="1"/>
</dbReference>
<dbReference type="Gene3D" id="1.50.10.100">
    <property type="entry name" value="Chondroitin AC/alginate lyase"/>
    <property type="match status" value="1"/>
</dbReference>
<dbReference type="HAMAP" id="MF_00557">
    <property type="entry name" value="Alginate_lyase"/>
    <property type="match status" value="1"/>
</dbReference>
<dbReference type="InterPro" id="IPR022859">
    <property type="entry name" value="Alginate_lyase"/>
</dbReference>
<dbReference type="InterPro" id="IPR008397">
    <property type="entry name" value="Alginate_lyase_dom"/>
</dbReference>
<dbReference type="InterPro" id="IPR008929">
    <property type="entry name" value="Chondroitin_lyas"/>
</dbReference>
<dbReference type="NCBIfam" id="NF001467">
    <property type="entry name" value="PRK00325.1-2"/>
    <property type="match status" value="1"/>
</dbReference>
<dbReference type="NCBIfam" id="NF001470">
    <property type="entry name" value="PRK00325.1-5"/>
    <property type="match status" value="1"/>
</dbReference>
<dbReference type="Pfam" id="PF05426">
    <property type="entry name" value="Alginate_lyase"/>
    <property type="match status" value="1"/>
</dbReference>
<dbReference type="SUPFAM" id="SSF48230">
    <property type="entry name" value="Chondroitin AC/alginate lyase"/>
    <property type="match status" value="1"/>
</dbReference>
<feature type="signal peptide" evidence="1">
    <location>
        <begin position="1"/>
        <end position="24"/>
    </location>
</feature>
<feature type="chain" id="PRO_5000314720" description="Alginate lyase">
    <location>
        <begin position="25"/>
        <end position="367"/>
    </location>
</feature>
<feature type="binding site" evidence="1">
    <location>
        <begin position="63"/>
        <end position="64"/>
    </location>
    <ligand>
        <name>substrate</name>
    </ligand>
</feature>
<feature type="binding site" evidence="1">
    <location>
        <begin position="136"/>
        <end position="137"/>
    </location>
    <ligand>
        <name>substrate</name>
    </ligand>
</feature>
<feature type="binding site" evidence="1">
    <location>
        <position position="254"/>
    </location>
    <ligand>
        <name>substrate</name>
    </ligand>
</feature>
<proteinExistence type="inferred from homology"/>
<protein>
    <recommendedName>
        <fullName evidence="1">Alginate lyase</fullName>
        <ecNumber evidence="1">4.2.2.3</ecNumber>
    </recommendedName>
    <alternativeName>
        <fullName evidence="1">Poly(beta-D-mannuronate) lyase</fullName>
    </alternativeName>
</protein>
<name>ALGL_PSEPW</name>
<organism>
    <name type="scientific">Pseudomonas putida (strain W619)</name>
    <dbReference type="NCBI Taxonomy" id="390235"/>
    <lineage>
        <taxon>Bacteria</taxon>
        <taxon>Pseudomonadati</taxon>
        <taxon>Pseudomonadota</taxon>
        <taxon>Gammaproteobacteria</taxon>
        <taxon>Pseudomonadales</taxon>
        <taxon>Pseudomonadaceae</taxon>
        <taxon>Pseudomonas</taxon>
    </lineage>
</organism>
<evidence type="ECO:0000255" key="1">
    <source>
        <dbReference type="HAMAP-Rule" id="MF_00557"/>
    </source>
</evidence>